<proteinExistence type="inferred from homology"/>
<evidence type="ECO:0000250" key="1">
    <source>
        <dbReference type="UniProtKB" id="Q4WAW6"/>
    </source>
</evidence>
<evidence type="ECO:0000255" key="2">
    <source>
        <dbReference type="PROSITE-ProRule" id="PRU01020"/>
    </source>
</evidence>
<evidence type="ECO:0000269" key="3">
    <source>
    </source>
</evidence>
<evidence type="ECO:0000303" key="4">
    <source>
    </source>
</evidence>
<dbReference type="EC" id="2.1.1.293" evidence="1"/>
<dbReference type="EMBL" id="DS027694">
    <property type="protein sequence ID" value="EAW19751.1"/>
    <property type="molecule type" value="Genomic_DNA"/>
</dbReference>
<dbReference type="RefSeq" id="XP_001261648.1">
    <property type="nucleotide sequence ID" value="XM_001261647.1"/>
</dbReference>
<dbReference type="SMR" id="A1DA61"/>
<dbReference type="STRING" id="331117.A1DA61"/>
<dbReference type="EnsemblFungi" id="EAW19751">
    <property type="protein sequence ID" value="EAW19751"/>
    <property type="gene ID" value="NFIA_093710"/>
</dbReference>
<dbReference type="GeneID" id="4588681"/>
<dbReference type="KEGG" id="nfi:NFIA_093710"/>
<dbReference type="VEuPathDB" id="FungiDB:NFIA_093710"/>
<dbReference type="eggNOG" id="KOG3178">
    <property type="taxonomic scope" value="Eukaryota"/>
</dbReference>
<dbReference type="HOGENOM" id="CLU_005533_1_4_1"/>
<dbReference type="OMA" id="RRSDIGM"/>
<dbReference type="OrthoDB" id="1606438at2759"/>
<dbReference type="Proteomes" id="UP000006702">
    <property type="component" value="Unassembled WGS sequence"/>
</dbReference>
<dbReference type="GO" id="GO:0008171">
    <property type="term" value="F:O-methyltransferase activity"/>
    <property type="evidence" value="ECO:0007669"/>
    <property type="project" value="InterPro"/>
</dbReference>
<dbReference type="GO" id="GO:0009820">
    <property type="term" value="P:alkaloid metabolic process"/>
    <property type="evidence" value="ECO:0007669"/>
    <property type="project" value="UniProtKB-KW"/>
</dbReference>
<dbReference type="GO" id="GO:0032259">
    <property type="term" value="P:methylation"/>
    <property type="evidence" value="ECO:0007669"/>
    <property type="project" value="UniProtKB-KW"/>
</dbReference>
<dbReference type="GO" id="GO:0044550">
    <property type="term" value="P:secondary metabolite biosynthetic process"/>
    <property type="evidence" value="ECO:0007669"/>
    <property type="project" value="UniProtKB-ARBA"/>
</dbReference>
<dbReference type="FunFam" id="3.40.50.150:FF:000646">
    <property type="entry name" value="6-hydroxytryprostatin B O-methyltransferase"/>
    <property type="match status" value="1"/>
</dbReference>
<dbReference type="Gene3D" id="3.40.50.150">
    <property type="entry name" value="Vaccinia Virus protein VP39"/>
    <property type="match status" value="1"/>
</dbReference>
<dbReference type="Gene3D" id="1.10.10.10">
    <property type="entry name" value="Winged helix-like DNA-binding domain superfamily/Winged helix DNA-binding domain"/>
    <property type="match status" value="1"/>
</dbReference>
<dbReference type="InterPro" id="IPR016461">
    <property type="entry name" value="COMT-like"/>
</dbReference>
<dbReference type="InterPro" id="IPR001077">
    <property type="entry name" value="O_MeTrfase_dom"/>
</dbReference>
<dbReference type="InterPro" id="IPR029063">
    <property type="entry name" value="SAM-dependent_MTases_sf"/>
</dbReference>
<dbReference type="InterPro" id="IPR036388">
    <property type="entry name" value="WH-like_DNA-bd_sf"/>
</dbReference>
<dbReference type="InterPro" id="IPR036390">
    <property type="entry name" value="WH_DNA-bd_sf"/>
</dbReference>
<dbReference type="PANTHER" id="PTHR43712:SF5">
    <property type="entry name" value="O-METHYLTRANSFERASE ASQN-RELATED"/>
    <property type="match status" value="1"/>
</dbReference>
<dbReference type="PANTHER" id="PTHR43712">
    <property type="entry name" value="PUTATIVE (AFU_ORTHOLOGUE AFUA_4G14580)-RELATED"/>
    <property type="match status" value="1"/>
</dbReference>
<dbReference type="Pfam" id="PF00891">
    <property type="entry name" value="Methyltransf_2"/>
    <property type="match status" value="1"/>
</dbReference>
<dbReference type="SUPFAM" id="SSF53335">
    <property type="entry name" value="S-adenosyl-L-methionine-dependent methyltransferases"/>
    <property type="match status" value="1"/>
</dbReference>
<dbReference type="SUPFAM" id="SSF46785">
    <property type="entry name" value="Winged helix' DNA-binding domain"/>
    <property type="match status" value="1"/>
</dbReference>
<dbReference type="PROSITE" id="PS51683">
    <property type="entry name" value="SAM_OMT_II"/>
    <property type="match status" value="1"/>
</dbReference>
<name>FTMD_NEOFI</name>
<keyword id="KW-0017">Alkaloid metabolism</keyword>
<keyword id="KW-0489">Methyltransferase</keyword>
<keyword id="KW-1185">Reference proteome</keyword>
<keyword id="KW-0949">S-adenosyl-L-methionine</keyword>
<keyword id="KW-0808">Transferase</keyword>
<keyword id="KW-0843">Virulence</keyword>
<reference key="1">
    <citation type="journal article" date="2008" name="PLoS Genet.">
        <title>Genomic islands in the pathogenic filamentous fungus Aspergillus fumigatus.</title>
        <authorList>
            <person name="Fedorova N.D."/>
            <person name="Khaldi N."/>
            <person name="Joardar V.S."/>
            <person name="Maiti R."/>
            <person name="Amedeo P."/>
            <person name="Anderson M.J."/>
            <person name="Crabtree J."/>
            <person name="Silva J.C."/>
            <person name="Badger J.H."/>
            <person name="Albarraq A."/>
            <person name="Angiuoli S."/>
            <person name="Bussey H."/>
            <person name="Bowyer P."/>
            <person name="Cotty P.J."/>
            <person name="Dyer P.S."/>
            <person name="Egan A."/>
            <person name="Galens K."/>
            <person name="Fraser-Liggett C.M."/>
            <person name="Haas B.J."/>
            <person name="Inman J.M."/>
            <person name="Kent R."/>
            <person name="Lemieux S."/>
            <person name="Malavazi I."/>
            <person name="Orvis J."/>
            <person name="Roemer T."/>
            <person name="Ronning C.M."/>
            <person name="Sundaram J.P."/>
            <person name="Sutton G."/>
            <person name="Turner G."/>
            <person name="Venter J.C."/>
            <person name="White O.R."/>
            <person name="Whitty B.R."/>
            <person name="Youngman P."/>
            <person name="Wolfe K.H."/>
            <person name="Goldman G.H."/>
            <person name="Wortman J.R."/>
            <person name="Jiang B."/>
            <person name="Denning D.W."/>
            <person name="Nierman W.C."/>
        </authorList>
    </citation>
    <scope>NUCLEOTIDE SEQUENCE [LARGE SCALE GENOMIC DNA]</scope>
    <source>
        <strain>ATCC 1020 / DSM 3700 / CBS 544.65 / FGSC A1164 / JCM 1740 / NRRL 181 / WB 181</strain>
    </source>
</reference>
<reference key="2">
    <citation type="journal article" date="2012" name="ChemBioChem">
        <title>Identification of the verruculogen prenyltransferase FtmPT3 by a combination of chemical, bioinformatic and biochemical approaches.</title>
        <authorList>
            <person name="Mundt K."/>
            <person name="Wollinsky B."/>
            <person name="Ruan H.L."/>
            <person name="Zhu T."/>
            <person name="Li S.M."/>
        </authorList>
    </citation>
    <scope>FUNCTION</scope>
</reference>
<accession>A1DA61</accession>
<sequence length="411" mass="45863">MFNLPEVATRLSQNVELLVDEIDKTGSQPNCGNPTLLGPKGLAARDEIILAAEKLLQQGRGPGPSLLSLLESAVDIGTIQTLIRLEVPDQVPPTGSIPYDALVKKLKTPVAPELLQRLIRFTRLAGFLDEDEEGAVKHSPMSAIFVSDPDSAGQARFMADFGIRPCSFIYESIKLDPSGEATRQGPLALMAREPGAREGPTFFEVLEKDPVNRNRWHDGMAVHNDSMVRHVADAYDWDTVKSLVDIGGSEGHVAAVIANAFAHIQITVQDRPEIIEKARQRVDRHRNITFEEHDFFTPQPRIADAYFLRLILHDWNDADCTRIVRQISSALRPGARLLIMDAVLPEPGEGSLQSERQLRRSDIGMYTLFSAKERSLVQMRRLVEDCDDRLRFEKLYTPPGSHASMLSWICE</sequence>
<feature type="chain" id="PRO_0000424130" description="6-hydroxytryprostatin B O-methyltransferase">
    <location>
        <begin position="1"/>
        <end position="411"/>
    </location>
</feature>
<feature type="active site" description="Proton acceptor" evidence="2">
    <location>
        <position position="313"/>
    </location>
</feature>
<feature type="binding site" evidence="2">
    <location>
        <position position="270"/>
    </location>
    <ligand>
        <name>S-adenosyl-L-methionine</name>
        <dbReference type="ChEBI" id="CHEBI:59789"/>
    </ligand>
</feature>
<comment type="function">
    <text evidence="1 3">6-hydroxytryprostatin B O-methyltransferase; part of the gene cluster that mediates the biosynthesis of fumitremorgins, indole alkaloids that carry not only intriguing chemical structures, but also interesting biological and pharmacological activities (PubMed:23109474). The biosynthesis of fumitremorgin-type alkaloids begins by condensation of the two amino acids L-tryptophan and L-proline to brevianamide F, catalyzed by the non-ribosomal peptide synthetase ftmPS/ftmA (By similarity). Brevianamide F is then prenylated by the prenyltransferase ftmPT1/ftmB in the presence of dimethylallyl diphosphate, resulting in the formation of tryprostatin B (By similarity). The three cytochrome P450 monooxygenases, ftmP450-1/ftmC, ftmP450-2/ftmE and ftmP450-3/FtmG, are responsible for the conversion of tryprostatin B to 6-hydroxytryprostatin B, tryprostatin A to fumitremorgin C and fumitremorgin C to 12,13-dihydroxyfumitremorgin C, respectively (By similarity). The putative methyltransferase ftmMT/ftmD is expected for the conversion of 6-hydroxytryprostatin B to tryprostatin A (By similarity). FtmPT2/FtmH catalyzes the prenylation of 12,13-dihydroxyfumitre-morgin C in the presence of dimethylallyl diphosphate, resulting in the formation of fumitremorgin B (By similarity). Fumitremorgin B is further converted to verruculogen by ftmOx1/ftmF via the insertion of an endoperoxide bond between the two prenyl moieties (By similarity). Finally, verruculogen is further converted to fumitremorgin A by the verruculogen prenyltransferase ftmPT3 (PubMed:23109474).</text>
</comment>
<comment type="catalytic activity">
    <reaction evidence="1">
        <text>6-hydroxytryprostatin B + S-adenosyl-L-methionine = tryprostatin A + S-adenosyl-L-homocysteine + H(+)</text>
        <dbReference type="Rhea" id="RHEA:37903"/>
        <dbReference type="ChEBI" id="CHEBI:15378"/>
        <dbReference type="ChEBI" id="CHEBI:57856"/>
        <dbReference type="ChEBI" id="CHEBI:59789"/>
        <dbReference type="ChEBI" id="CHEBI:72761"/>
        <dbReference type="ChEBI" id="CHEBI:72762"/>
        <dbReference type="EC" id="2.1.1.293"/>
    </reaction>
</comment>
<comment type="pathway">
    <text evidence="1">Alkaloid biosynthesis.</text>
</comment>
<comment type="subunit">
    <text evidence="1">Homodimer.</text>
</comment>
<comment type="similarity">
    <text evidence="2">Belongs to the class I-like SAM-binding methyltransferase superfamily. Cation-independent O-methyltransferase family.</text>
</comment>
<gene>
    <name evidence="4" type="primary">ftmMT</name>
    <name evidence="1" type="synonym">ftmD</name>
    <name type="ORF">NFIA_093710</name>
</gene>
<organism>
    <name type="scientific">Neosartorya fischeri (strain ATCC 1020 / DSM 3700 / CBS 544.65 / FGSC A1164 / JCM 1740 / NRRL 181 / WB 181)</name>
    <name type="common">Aspergillus fischerianus</name>
    <dbReference type="NCBI Taxonomy" id="331117"/>
    <lineage>
        <taxon>Eukaryota</taxon>
        <taxon>Fungi</taxon>
        <taxon>Dikarya</taxon>
        <taxon>Ascomycota</taxon>
        <taxon>Pezizomycotina</taxon>
        <taxon>Eurotiomycetes</taxon>
        <taxon>Eurotiomycetidae</taxon>
        <taxon>Eurotiales</taxon>
        <taxon>Aspergillaceae</taxon>
        <taxon>Aspergillus</taxon>
        <taxon>Aspergillus subgen. Fumigati</taxon>
    </lineage>
</organism>
<protein>
    <recommendedName>
        <fullName evidence="4">6-hydroxytryprostatin B O-methyltransferase</fullName>
        <ecNumber evidence="1">2.1.1.293</ecNumber>
    </recommendedName>
    <alternativeName>
        <fullName evidence="1">Fumitremorgin biosynthesis protein D</fullName>
    </alternativeName>
</protein>